<protein>
    <recommendedName>
        <fullName evidence="1">Non-structural protein 2</fullName>
        <shortName evidence="1">NSP2</shortName>
        <ecNumber evidence="1">3.6.4.-</ecNumber>
    </recommendedName>
    <alternativeName>
        <fullName evidence="1">NCVP3</fullName>
    </alternativeName>
    <alternativeName>
        <fullName evidence="1">Non-structural RNA-binding protein 35</fullName>
        <shortName evidence="1">NS35</shortName>
    </alternativeName>
</protein>
<organismHost>
    <name type="scientific">Homo sapiens</name>
    <name type="common">Human</name>
    <dbReference type="NCBI Taxonomy" id="9606"/>
</organismHost>
<proteinExistence type="inferred from homology"/>
<comment type="function">
    <text evidence="1">Participates in replication and packaging of the viral genome. Plays a crucial role, together with NSP5, in the formation of virus factories (viroplasms) which are large inclusions in the host cytoplasm where replication intermediates are assembled and viral RNA replication takes place. Displays ssRNA binding, NTPase, RNA triphosphatase (RTPase) and ATP-independent helix-unwinding activities. The unwinding activity may prepare and organize plus-strand RNAs for packaging and replication by removing interfering secondary structures. The RTPase activity plays a role in the removal of the gamma-phosphate from the rotavirus RNA minus strands of dsRNA genome segments.</text>
</comment>
<comment type="cofactor">
    <cofactor evidence="1">
        <name>Mg(2+)</name>
        <dbReference type="ChEBI" id="CHEBI:18420"/>
    </cofactor>
</comment>
<comment type="subunit">
    <text evidence="1">Homooctamer. Interacts with VP1; this interaction is weak. Interacts with NSP5; this interaction leads to up-regulation of NSP5 phosphorylation and formation of viral factories.</text>
</comment>
<comment type="subcellular location">
    <subcellularLocation>
        <location evidence="1">Host cytoplasm</location>
    </subcellularLocation>
    <text evidence="1">Found in spherical cytoplasmic structures, called viral factories, that appear early after infection and are the site of viral replication and packaging.</text>
</comment>
<comment type="similarity">
    <text evidence="1">Belongs to the rotavirus NSP2 family.</text>
</comment>
<feature type="chain" id="PRO_0000369852" description="Non-structural protein 2">
    <location>
        <begin position="1"/>
        <end position="297"/>
    </location>
</feature>
<feature type="region of interest" description="RNA-binding" evidence="1">
    <location>
        <begin position="212"/>
        <end position="247"/>
    </location>
</feature>
<feature type="active site" description="For NTPase and RTPase activities" evidence="1">
    <location>
        <position position="231"/>
    </location>
</feature>
<feature type="binding site" evidence="1">
    <location>
        <begin position="119"/>
        <end position="121"/>
    </location>
    <ligand>
        <name>ATP</name>
        <dbReference type="ChEBI" id="CHEBI:30616"/>
    </ligand>
</feature>
<feature type="binding site" evidence="1">
    <location>
        <position position="198"/>
    </location>
    <ligand>
        <name>ATP</name>
        <dbReference type="ChEBI" id="CHEBI:30616"/>
    </ligand>
</feature>
<feature type="binding site" evidence="1">
    <location>
        <begin position="227"/>
        <end position="229"/>
    </location>
    <ligand>
        <name>ATP</name>
        <dbReference type="ChEBI" id="CHEBI:30616"/>
    </ligand>
</feature>
<feature type="binding site" evidence="1">
    <location>
        <position position="233"/>
    </location>
    <ligand>
        <name>ATP</name>
        <dbReference type="ChEBI" id="CHEBI:30616"/>
    </ligand>
</feature>
<reference key="1">
    <citation type="journal article" date="2007" name="Arch. Virol.">
        <title>Genetic analysis of an ADRV-N-like novel rotavirus strain B219 detected in a sporadic case of adult diarrhea in Bangladesh.</title>
        <authorList>
            <person name="Alam M.M."/>
            <person name="Kobayashi N."/>
            <person name="Ishino M."/>
            <person name="Ahmed M.S."/>
            <person name="Ahmed M.U."/>
            <person name="Paul S.K."/>
            <person name="Muzumdar B.K."/>
            <person name="Hussain Z."/>
            <person name="Wang Y.H."/>
            <person name="Naik T.N."/>
        </authorList>
    </citation>
    <scope>NUCLEOTIDE SEQUENCE [GENOMIC RNA]</scope>
</reference>
<keyword id="KW-0067">ATP-binding</keyword>
<keyword id="KW-1035">Host cytoplasm</keyword>
<keyword id="KW-0378">Hydrolase</keyword>
<keyword id="KW-0460">Magnesium</keyword>
<keyword id="KW-0479">Metal-binding</keyword>
<keyword id="KW-0547">Nucleotide-binding</keyword>
<keyword id="KW-0694">RNA-binding</keyword>
<organism>
    <name type="scientific">Rotavirus X (isolate RVX/Human/Bangladesh/NADRV-B219/2002/GXP[X])</name>
    <name type="common">RV ADRV-N</name>
    <name type="synonym">Rotavirus (isolate novel adult diarrhea rotavirus-B219)</name>
    <dbReference type="NCBI Taxonomy" id="348136"/>
    <lineage>
        <taxon>Viruses</taxon>
        <taxon>Riboviria</taxon>
        <taxon>Orthornavirae</taxon>
        <taxon>Duplornaviricota</taxon>
        <taxon>Resentoviricetes</taxon>
        <taxon>Reovirales</taxon>
        <taxon>Sedoreoviridae</taxon>
        <taxon>Rotavirus</taxon>
    </lineage>
</organism>
<dbReference type="EC" id="3.6.4.-" evidence="1"/>
<dbReference type="EMBL" id="DQ168035">
    <property type="protein sequence ID" value="ABA60395.1"/>
    <property type="molecule type" value="Genomic_RNA"/>
</dbReference>
<dbReference type="SMR" id="Q0H8C2"/>
<dbReference type="Proteomes" id="UP000174021">
    <property type="component" value="Genome"/>
</dbReference>
<dbReference type="GO" id="GO:0030430">
    <property type="term" value="C:host cell cytoplasm"/>
    <property type="evidence" value="ECO:0007669"/>
    <property type="project" value="UniProtKB-SubCell"/>
</dbReference>
<dbReference type="GO" id="GO:0005524">
    <property type="term" value="F:ATP binding"/>
    <property type="evidence" value="ECO:0007669"/>
    <property type="project" value="UniProtKB-KW"/>
</dbReference>
<dbReference type="GO" id="GO:0016817">
    <property type="term" value="F:hydrolase activity, acting on acid anhydrides"/>
    <property type="evidence" value="ECO:0007669"/>
    <property type="project" value="UniProtKB-UniRule"/>
</dbReference>
<dbReference type="GO" id="GO:0046872">
    <property type="term" value="F:metal ion binding"/>
    <property type="evidence" value="ECO:0007669"/>
    <property type="project" value="UniProtKB-UniRule"/>
</dbReference>
<dbReference type="GO" id="GO:0003723">
    <property type="term" value="F:RNA binding"/>
    <property type="evidence" value="ECO:0007669"/>
    <property type="project" value="UniProtKB-UniRule"/>
</dbReference>
<dbReference type="GO" id="GO:0019079">
    <property type="term" value="P:viral genome replication"/>
    <property type="evidence" value="ECO:0007669"/>
    <property type="project" value="UniProtKB-UniRule"/>
</dbReference>
<dbReference type="HAMAP" id="MF_04089">
    <property type="entry name" value="ROTA_NSP2"/>
    <property type="match status" value="1"/>
</dbReference>
<dbReference type="InterPro" id="IPR003668">
    <property type="entry name" value="Rotavirus_NSP2"/>
</dbReference>
<name>NSP2_ROTB2</name>
<evidence type="ECO:0000255" key="1">
    <source>
        <dbReference type="HAMAP-Rule" id="MF_04089"/>
    </source>
</evidence>
<accession>Q0H8C2</accession>
<sequence length="297" mass="33554">MVSIKVSLADFIVKTDEGWIPSDNCPALDRFKTKTEKELLDSIKREGADRASIRKQLFLTPISNKRLTQIGGVPVRDIRTSTTIPSSTRNLITDWLLNIFNDEESGEEVENAIASKYPDIFCSADKISRVAQRLENRRDRVHEDGFRILSATMLAIDSDIATEGKCEIVRATEDAIIAKFEPVSEHLCIGNPRGVFYKAFPIKKEQPMVYGIKALLGISNRDFIMNHGHGHLRTVPYSEINNAIRSFAKKNEAEIKRIRSDSLSPNAGEKFINMCDMLLQKEKIETIIAKIMKNDKN</sequence>